<organism>
    <name type="scientific">Homo sapiens</name>
    <name type="common">Human</name>
    <dbReference type="NCBI Taxonomy" id="9606"/>
    <lineage>
        <taxon>Eukaryota</taxon>
        <taxon>Metazoa</taxon>
        <taxon>Chordata</taxon>
        <taxon>Craniata</taxon>
        <taxon>Vertebrata</taxon>
        <taxon>Euteleostomi</taxon>
        <taxon>Mammalia</taxon>
        <taxon>Eutheria</taxon>
        <taxon>Euarchontoglires</taxon>
        <taxon>Primates</taxon>
        <taxon>Haplorrhini</taxon>
        <taxon>Catarrhini</taxon>
        <taxon>Hominidae</taxon>
        <taxon>Homo</taxon>
    </lineage>
</organism>
<gene>
    <name type="primary">FAM219A</name>
    <name type="synonym">C9orf25</name>
</gene>
<keyword id="KW-0007">Acetylation</keyword>
<keyword id="KW-0025">Alternative splicing</keyword>
<keyword id="KW-0597">Phosphoprotein</keyword>
<keyword id="KW-1267">Proteomics identification</keyword>
<keyword id="KW-1185">Reference proteome</keyword>
<sequence length="185" mass="20400">MMEEIDRFQVPTAHSEMQPLDPAAASISDGDCDAREGESVAMNYKPSPLQVKLEKQRELARKGSLKNGSMGSPVNQQPKKNNVMARTRLVVPNKGYSSLDQSPDEKPLVALDTDSDDDFDMSRYSSSGYSSAEQINQDLNIQLLKDGYRLDEIPDDEDLDLIPPKSVNPTCMCCQATSSTACHIQ</sequence>
<reference key="1">
    <citation type="submission" date="2000-03" db="EMBL/GenBank/DDBJ databases">
        <authorList>
            <consortium name="The Cancer Genome Anatomy Project (CGAP) at the National Cancer Institute"/>
        </authorList>
    </citation>
    <scope>NUCLEOTIDE SEQUENCE [LARGE SCALE MRNA] (ISOFORM 7)</scope>
</reference>
<reference key="2">
    <citation type="journal article" date="2004" name="Nat. Genet.">
        <title>Complete sequencing and characterization of 21,243 full-length human cDNAs.</title>
        <authorList>
            <person name="Ota T."/>
            <person name="Suzuki Y."/>
            <person name="Nishikawa T."/>
            <person name="Otsuki T."/>
            <person name="Sugiyama T."/>
            <person name="Irie R."/>
            <person name="Wakamatsu A."/>
            <person name="Hayashi K."/>
            <person name="Sato H."/>
            <person name="Nagai K."/>
            <person name="Kimura K."/>
            <person name="Makita H."/>
            <person name="Sekine M."/>
            <person name="Obayashi M."/>
            <person name="Nishi T."/>
            <person name="Shibahara T."/>
            <person name="Tanaka T."/>
            <person name="Ishii S."/>
            <person name="Yamamoto J."/>
            <person name="Saito K."/>
            <person name="Kawai Y."/>
            <person name="Isono Y."/>
            <person name="Nakamura Y."/>
            <person name="Nagahari K."/>
            <person name="Murakami K."/>
            <person name="Yasuda T."/>
            <person name="Iwayanagi T."/>
            <person name="Wagatsuma M."/>
            <person name="Shiratori A."/>
            <person name="Sudo H."/>
            <person name="Hosoiri T."/>
            <person name="Kaku Y."/>
            <person name="Kodaira H."/>
            <person name="Kondo H."/>
            <person name="Sugawara M."/>
            <person name="Takahashi M."/>
            <person name="Kanda K."/>
            <person name="Yokoi T."/>
            <person name="Furuya T."/>
            <person name="Kikkawa E."/>
            <person name="Omura Y."/>
            <person name="Abe K."/>
            <person name="Kamihara K."/>
            <person name="Katsuta N."/>
            <person name="Sato K."/>
            <person name="Tanikawa M."/>
            <person name="Yamazaki M."/>
            <person name="Ninomiya K."/>
            <person name="Ishibashi T."/>
            <person name="Yamashita H."/>
            <person name="Murakawa K."/>
            <person name="Fujimori K."/>
            <person name="Tanai H."/>
            <person name="Kimata M."/>
            <person name="Watanabe M."/>
            <person name="Hiraoka S."/>
            <person name="Chiba Y."/>
            <person name="Ishida S."/>
            <person name="Ono Y."/>
            <person name="Takiguchi S."/>
            <person name="Watanabe S."/>
            <person name="Yosida M."/>
            <person name="Hotuta T."/>
            <person name="Kusano J."/>
            <person name="Kanehori K."/>
            <person name="Takahashi-Fujii A."/>
            <person name="Hara H."/>
            <person name="Tanase T.-O."/>
            <person name="Nomura Y."/>
            <person name="Togiya S."/>
            <person name="Komai F."/>
            <person name="Hara R."/>
            <person name="Takeuchi K."/>
            <person name="Arita M."/>
            <person name="Imose N."/>
            <person name="Musashino K."/>
            <person name="Yuuki H."/>
            <person name="Oshima A."/>
            <person name="Sasaki N."/>
            <person name="Aotsuka S."/>
            <person name="Yoshikawa Y."/>
            <person name="Matsunawa H."/>
            <person name="Ichihara T."/>
            <person name="Shiohata N."/>
            <person name="Sano S."/>
            <person name="Moriya S."/>
            <person name="Momiyama H."/>
            <person name="Satoh N."/>
            <person name="Takami S."/>
            <person name="Terashima Y."/>
            <person name="Suzuki O."/>
            <person name="Nakagawa S."/>
            <person name="Senoh A."/>
            <person name="Mizoguchi H."/>
            <person name="Goto Y."/>
            <person name="Shimizu F."/>
            <person name="Wakebe H."/>
            <person name="Hishigaki H."/>
            <person name="Watanabe T."/>
            <person name="Sugiyama A."/>
            <person name="Takemoto M."/>
            <person name="Kawakami B."/>
            <person name="Yamazaki M."/>
            <person name="Watanabe K."/>
            <person name="Kumagai A."/>
            <person name="Itakura S."/>
            <person name="Fukuzumi Y."/>
            <person name="Fujimori Y."/>
            <person name="Komiyama M."/>
            <person name="Tashiro H."/>
            <person name="Tanigami A."/>
            <person name="Fujiwara T."/>
            <person name="Ono T."/>
            <person name="Yamada K."/>
            <person name="Fujii Y."/>
            <person name="Ozaki K."/>
            <person name="Hirao M."/>
            <person name="Ohmori Y."/>
            <person name="Kawabata A."/>
            <person name="Hikiji T."/>
            <person name="Kobatake N."/>
            <person name="Inagaki H."/>
            <person name="Ikema Y."/>
            <person name="Okamoto S."/>
            <person name="Okitani R."/>
            <person name="Kawakami T."/>
            <person name="Noguchi S."/>
            <person name="Itoh T."/>
            <person name="Shigeta K."/>
            <person name="Senba T."/>
            <person name="Matsumura K."/>
            <person name="Nakajima Y."/>
            <person name="Mizuno T."/>
            <person name="Morinaga M."/>
            <person name="Sasaki M."/>
            <person name="Togashi T."/>
            <person name="Oyama M."/>
            <person name="Hata H."/>
            <person name="Watanabe M."/>
            <person name="Komatsu T."/>
            <person name="Mizushima-Sugano J."/>
            <person name="Satoh T."/>
            <person name="Shirai Y."/>
            <person name="Takahashi Y."/>
            <person name="Nakagawa K."/>
            <person name="Okumura K."/>
            <person name="Nagase T."/>
            <person name="Nomura N."/>
            <person name="Kikuchi H."/>
            <person name="Masuho Y."/>
            <person name="Yamashita R."/>
            <person name="Nakai K."/>
            <person name="Yada T."/>
            <person name="Nakamura Y."/>
            <person name="Ohara O."/>
            <person name="Isogai T."/>
            <person name="Sugano S."/>
        </authorList>
    </citation>
    <scope>NUCLEOTIDE SEQUENCE [LARGE SCALE MRNA] (ISOFORMS 1; 2; 4 AND 6)</scope>
    <source>
        <tissue>Brain</tissue>
        <tissue>Cerebellum</tissue>
        <tissue>Teratocarcinoma</tissue>
    </source>
</reference>
<reference key="3">
    <citation type="journal article" date="2004" name="Nature">
        <title>DNA sequence and analysis of human chromosome 9.</title>
        <authorList>
            <person name="Humphray S.J."/>
            <person name="Oliver K."/>
            <person name="Hunt A.R."/>
            <person name="Plumb R.W."/>
            <person name="Loveland J.E."/>
            <person name="Howe K.L."/>
            <person name="Andrews T.D."/>
            <person name="Searle S."/>
            <person name="Hunt S.E."/>
            <person name="Scott C.E."/>
            <person name="Jones M.C."/>
            <person name="Ainscough R."/>
            <person name="Almeida J.P."/>
            <person name="Ambrose K.D."/>
            <person name="Ashwell R.I.S."/>
            <person name="Babbage A.K."/>
            <person name="Babbage S."/>
            <person name="Bagguley C.L."/>
            <person name="Bailey J."/>
            <person name="Banerjee R."/>
            <person name="Barker D.J."/>
            <person name="Barlow K.F."/>
            <person name="Bates K."/>
            <person name="Beasley H."/>
            <person name="Beasley O."/>
            <person name="Bird C.P."/>
            <person name="Bray-Allen S."/>
            <person name="Brown A.J."/>
            <person name="Brown J.Y."/>
            <person name="Burford D."/>
            <person name="Burrill W."/>
            <person name="Burton J."/>
            <person name="Carder C."/>
            <person name="Carter N.P."/>
            <person name="Chapman J.C."/>
            <person name="Chen Y."/>
            <person name="Clarke G."/>
            <person name="Clark S.Y."/>
            <person name="Clee C.M."/>
            <person name="Clegg S."/>
            <person name="Collier R.E."/>
            <person name="Corby N."/>
            <person name="Crosier M."/>
            <person name="Cummings A.T."/>
            <person name="Davies J."/>
            <person name="Dhami P."/>
            <person name="Dunn M."/>
            <person name="Dutta I."/>
            <person name="Dyer L.W."/>
            <person name="Earthrowl M.E."/>
            <person name="Faulkner L."/>
            <person name="Fleming C.J."/>
            <person name="Frankish A."/>
            <person name="Frankland J.A."/>
            <person name="French L."/>
            <person name="Fricker D.G."/>
            <person name="Garner P."/>
            <person name="Garnett J."/>
            <person name="Ghori J."/>
            <person name="Gilbert J.G.R."/>
            <person name="Glison C."/>
            <person name="Grafham D.V."/>
            <person name="Gribble S."/>
            <person name="Griffiths C."/>
            <person name="Griffiths-Jones S."/>
            <person name="Grocock R."/>
            <person name="Guy J."/>
            <person name="Hall R.E."/>
            <person name="Hammond S."/>
            <person name="Harley J.L."/>
            <person name="Harrison E.S.I."/>
            <person name="Hart E.A."/>
            <person name="Heath P.D."/>
            <person name="Henderson C.D."/>
            <person name="Hopkins B.L."/>
            <person name="Howard P.J."/>
            <person name="Howden P.J."/>
            <person name="Huckle E."/>
            <person name="Johnson C."/>
            <person name="Johnson D."/>
            <person name="Joy A.A."/>
            <person name="Kay M."/>
            <person name="Keenan S."/>
            <person name="Kershaw J.K."/>
            <person name="Kimberley A.M."/>
            <person name="King A."/>
            <person name="Knights A."/>
            <person name="Laird G.K."/>
            <person name="Langford C."/>
            <person name="Lawlor S."/>
            <person name="Leongamornlert D.A."/>
            <person name="Leversha M."/>
            <person name="Lloyd C."/>
            <person name="Lloyd D.M."/>
            <person name="Lovell J."/>
            <person name="Martin S."/>
            <person name="Mashreghi-Mohammadi M."/>
            <person name="Matthews L."/>
            <person name="McLaren S."/>
            <person name="McLay K.E."/>
            <person name="McMurray A."/>
            <person name="Milne S."/>
            <person name="Nickerson T."/>
            <person name="Nisbett J."/>
            <person name="Nordsiek G."/>
            <person name="Pearce A.V."/>
            <person name="Peck A.I."/>
            <person name="Porter K.M."/>
            <person name="Pandian R."/>
            <person name="Pelan S."/>
            <person name="Phillimore B."/>
            <person name="Povey S."/>
            <person name="Ramsey Y."/>
            <person name="Rand V."/>
            <person name="Scharfe M."/>
            <person name="Sehra H.K."/>
            <person name="Shownkeen R."/>
            <person name="Sims S.K."/>
            <person name="Skuce C.D."/>
            <person name="Smith M."/>
            <person name="Steward C.A."/>
            <person name="Swarbreck D."/>
            <person name="Sycamore N."/>
            <person name="Tester J."/>
            <person name="Thorpe A."/>
            <person name="Tracey A."/>
            <person name="Tromans A."/>
            <person name="Thomas D.W."/>
            <person name="Wall M."/>
            <person name="Wallis J.M."/>
            <person name="West A.P."/>
            <person name="Whitehead S.L."/>
            <person name="Willey D.L."/>
            <person name="Williams S.A."/>
            <person name="Wilming L."/>
            <person name="Wray P.W."/>
            <person name="Young L."/>
            <person name="Ashurst J.L."/>
            <person name="Coulson A."/>
            <person name="Blocker H."/>
            <person name="Durbin R.M."/>
            <person name="Sulston J.E."/>
            <person name="Hubbard T."/>
            <person name="Jackson M.J."/>
            <person name="Bentley D.R."/>
            <person name="Beck S."/>
            <person name="Rogers J."/>
            <person name="Dunham I."/>
        </authorList>
    </citation>
    <scope>NUCLEOTIDE SEQUENCE [LARGE SCALE GENOMIC DNA]</scope>
</reference>
<reference key="4">
    <citation type="submission" date="2005-09" db="EMBL/GenBank/DDBJ databases">
        <authorList>
            <person name="Mural R.J."/>
            <person name="Istrail S."/>
            <person name="Sutton G.G."/>
            <person name="Florea L."/>
            <person name="Halpern A.L."/>
            <person name="Mobarry C.M."/>
            <person name="Lippert R."/>
            <person name="Walenz B."/>
            <person name="Shatkay H."/>
            <person name="Dew I."/>
            <person name="Miller J.R."/>
            <person name="Flanigan M.J."/>
            <person name="Edwards N.J."/>
            <person name="Bolanos R."/>
            <person name="Fasulo D."/>
            <person name="Halldorsson B.V."/>
            <person name="Hannenhalli S."/>
            <person name="Turner R."/>
            <person name="Yooseph S."/>
            <person name="Lu F."/>
            <person name="Nusskern D.R."/>
            <person name="Shue B.C."/>
            <person name="Zheng X.H."/>
            <person name="Zhong F."/>
            <person name="Delcher A.L."/>
            <person name="Huson D.H."/>
            <person name="Kravitz S.A."/>
            <person name="Mouchard L."/>
            <person name="Reinert K."/>
            <person name="Remington K.A."/>
            <person name="Clark A.G."/>
            <person name="Waterman M.S."/>
            <person name="Eichler E.E."/>
            <person name="Adams M.D."/>
            <person name="Hunkapiller M.W."/>
            <person name="Myers E.W."/>
            <person name="Venter J.C."/>
        </authorList>
    </citation>
    <scope>NUCLEOTIDE SEQUENCE [LARGE SCALE GENOMIC DNA]</scope>
</reference>
<reference key="5">
    <citation type="journal article" date="2004" name="Genome Res.">
        <title>The status, quality, and expansion of the NIH full-length cDNA project: the Mammalian Gene Collection (MGC).</title>
        <authorList>
            <consortium name="The MGC Project Team"/>
        </authorList>
    </citation>
    <scope>NUCLEOTIDE SEQUENCE [LARGE SCALE MRNA] (ISOFORM 3)</scope>
    <scope>NUCLEOTIDE SEQUENCE [LARGE SCALE MRNA] OF 113-185 (ISOFORM 2)</scope>
    <source>
        <tissue>Brain</tissue>
    </source>
</reference>
<reference key="6">
    <citation type="journal article" date="2006" name="Cell">
        <title>Global, in vivo, and site-specific phosphorylation dynamics in signaling networks.</title>
        <authorList>
            <person name="Olsen J.V."/>
            <person name="Blagoev B."/>
            <person name="Gnad F."/>
            <person name="Macek B."/>
            <person name="Kumar C."/>
            <person name="Mortensen P."/>
            <person name="Mann M."/>
        </authorList>
    </citation>
    <scope>IDENTIFICATION BY MASS SPECTROMETRY [LARGE SCALE ANALYSIS]</scope>
    <source>
        <tissue>Cervix carcinoma</tissue>
    </source>
</reference>
<reference key="7">
    <citation type="journal article" date="2008" name="Proc. Natl. Acad. Sci. U.S.A.">
        <title>A quantitative atlas of mitotic phosphorylation.</title>
        <authorList>
            <person name="Dephoure N."/>
            <person name="Zhou C."/>
            <person name="Villen J."/>
            <person name="Beausoleil S.A."/>
            <person name="Bakalarski C.E."/>
            <person name="Elledge S.J."/>
            <person name="Gygi S.P."/>
        </authorList>
    </citation>
    <scope>PHOSPHORYLATION [LARGE SCALE ANALYSIS] AT SER-47; SER-102; THR-113; SER-115 AND SER-122</scope>
    <scope>IDENTIFICATION BY MASS SPECTROMETRY [LARGE SCALE ANALYSIS]</scope>
    <source>
        <tissue>Cervix carcinoma</tissue>
    </source>
</reference>
<reference key="8">
    <citation type="journal article" date="2009" name="Anal. Chem.">
        <title>Lys-N and trypsin cover complementary parts of the phosphoproteome in a refined SCX-based approach.</title>
        <authorList>
            <person name="Gauci S."/>
            <person name="Helbig A.O."/>
            <person name="Slijper M."/>
            <person name="Krijgsveld J."/>
            <person name="Heck A.J."/>
            <person name="Mohammed S."/>
        </authorList>
    </citation>
    <scope>IDENTIFICATION BY MASS SPECTROMETRY [LARGE SCALE ANALYSIS]</scope>
</reference>
<reference key="9">
    <citation type="journal article" date="2009" name="Sci. Signal.">
        <title>Quantitative phosphoproteomic analysis of T cell receptor signaling reveals system-wide modulation of protein-protein interactions.</title>
        <authorList>
            <person name="Mayya V."/>
            <person name="Lundgren D.H."/>
            <person name="Hwang S.-I."/>
            <person name="Rezaul K."/>
            <person name="Wu L."/>
            <person name="Eng J.K."/>
            <person name="Rodionov V."/>
            <person name="Han D.K."/>
        </authorList>
    </citation>
    <scope>PHOSPHORYLATION [LARGE SCALE ANALYSIS] AT THR-113 AND SER-115</scope>
    <scope>IDENTIFICATION BY MASS SPECTROMETRY [LARGE SCALE ANALYSIS]</scope>
    <source>
        <tissue>Leukemic T-cell</tissue>
    </source>
</reference>
<reference key="10">
    <citation type="journal article" date="2011" name="Sci. Signal.">
        <title>System-wide temporal characterization of the proteome and phosphoproteome of human embryonic stem cell differentiation.</title>
        <authorList>
            <person name="Rigbolt K.T."/>
            <person name="Prokhorova T.A."/>
            <person name="Akimov V."/>
            <person name="Henningsen J."/>
            <person name="Johansen P.T."/>
            <person name="Kratchmarova I."/>
            <person name="Kassem M."/>
            <person name="Mann M."/>
            <person name="Olsen J.V."/>
            <person name="Blagoev B."/>
        </authorList>
    </citation>
    <scope>PHOSPHORYLATION [LARGE SCALE ANALYSIS] AT THR-113 AND SER-115</scope>
    <scope>IDENTIFICATION BY MASS SPECTROMETRY [LARGE SCALE ANALYSIS]</scope>
</reference>
<reference key="11">
    <citation type="journal article" date="2012" name="Proc. Natl. Acad. Sci. U.S.A.">
        <title>N-terminal acetylome analyses and functional insights of the N-terminal acetyltransferase NatB.</title>
        <authorList>
            <person name="Van Damme P."/>
            <person name="Lasa M."/>
            <person name="Polevoda B."/>
            <person name="Gazquez C."/>
            <person name="Elosegui-Artola A."/>
            <person name="Kim D.S."/>
            <person name="De Juan-Pardo E."/>
            <person name="Demeyer K."/>
            <person name="Hole K."/>
            <person name="Larrea E."/>
            <person name="Timmerman E."/>
            <person name="Prieto J."/>
            <person name="Arnesen T."/>
            <person name="Sherman F."/>
            <person name="Gevaert K."/>
            <person name="Aldabe R."/>
        </authorList>
    </citation>
    <scope>ACETYLATION [LARGE SCALE ANALYSIS] AT MET-1</scope>
    <scope>IDENTIFICATION BY MASS SPECTROMETRY [LARGE SCALE ANALYSIS]</scope>
</reference>
<evidence type="ECO:0000250" key="1">
    <source>
        <dbReference type="UniProtKB" id="Q9D772"/>
    </source>
</evidence>
<evidence type="ECO:0000256" key="2">
    <source>
        <dbReference type="SAM" id="MobiDB-lite"/>
    </source>
</evidence>
<evidence type="ECO:0000303" key="3">
    <source>
    </source>
</evidence>
<evidence type="ECO:0000303" key="4">
    <source>
    </source>
</evidence>
<evidence type="ECO:0000303" key="5">
    <source ref="1"/>
</evidence>
<evidence type="ECO:0000305" key="6"/>
<evidence type="ECO:0007744" key="7">
    <source>
    </source>
</evidence>
<evidence type="ECO:0007744" key="8">
    <source>
    </source>
</evidence>
<evidence type="ECO:0007744" key="9">
    <source>
    </source>
</evidence>
<evidence type="ECO:0007744" key="10">
    <source>
    </source>
</evidence>
<proteinExistence type="evidence at protein level"/>
<accession>Q8IW50</accession>
<accession>A2A364</accession>
<accession>B4DFE1</accession>
<accession>B4DSR8</accession>
<accession>Q5T590</accession>
<accession>Q5T591</accession>
<accession>Q5T592</accession>
<accession>Q5T594</accession>
<accession>Q5T595</accession>
<accession>Q8TAZ8</accession>
<protein>
    <recommendedName>
        <fullName>Protein FAM219A</fullName>
    </recommendedName>
</protein>
<dbReference type="EMBL" id="AI953059">
    <property type="status" value="NOT_ANNOTATED_CDS"/>
    <property type="molecule type" value="mRNA"/>
</dbReference>
<dbReference type="EMBL" id="AK096350">
    <property type="protein sequence ID" value="BAG53270.1"/>
    <property type="molecule type" value="mRNA"/>
</dbReference>
<dbReference type="EMBL" id="AK123887">
    <property type="status" value="NOT_ANNOTATED_CDS"/>
    <property type="molecule type" value="mRNA"/>
</dbReference>
<dbReference type="EMBL" id="AK294054">
    <property type="protein sequence ID" value="BAG57402.1"/>
    <property type="molecule type" value="mRNA"/>
</dbReference>
<dbReference type="EMBL" id="AK299882">
    <property type="protein sequence ID" value="BAG61730.1"/>
    <property type="molecule type" value="mRNA"/>
</dbReference>
<dbReference type="EMBL" id="AL160270">
    <property type="status" value="NOT_ANNOTATED_CDS"/>
    <property type="molecule type" value="Genomic_DNA"/>
</dbReference>
<dbReference type="EMBL" id="AL356494">
    <property type="status" value="NOT_ANNOTATED_CDS"/>
    <property type="molecule type" value="Genomic_DNA"/>
</dbReference>
<dbReference type="EMBL" id="CH471071">
    <property type="protein sequence ID" value="EAW58454.1"/>
    <property type="molecule type" value="Genomic_DNA"/>
</dbReference>
<dbReference type="EMBL" id="BC025348">
    <property type="protein sequence ID" value="AAH25348.1"/>
    <property type="molecule type" value="mRNA"/>
</dbReference>
<dbReference type="EMBL" id="BC041009">
    <property type="protein sequence ID" value="AAH41009.1"/>
    <property type="molecule type" value="mRNA"/>
</dbReference>
<dbReference type="CCDS" id="CCDS55304.1">
    <molecule id="Q8IW50-1"/>
</dbReference>
<dbReference type="CCDS" id="CCDS6556.1">
    <molecule id="Q8IW50-6"/>
</dbReference>
<dbReference type="RefSeq" id="NP_001171869.1">
    <molecule id="Q8IW50-1"/>
    <property type="nucleotide sequence ID" value="NM_001184940.2"/>
</dbReference>
<dbReference type="RefSeq" id="NP_001171870.1">
    <property type="nucleotide sequence ID" value="NM_001184941.1"/>
</dbReference>
<dbReference type="RefSeq" id="NP_001171871.1">
    <molecule id="Q8IW50-4"/>
    <property type="nucleotide sequence ID" value="NM_001184942.2"/>
</dbReference>
<dbReference type="RefSeq" id="NP_001171872.1">
    <molecule id="Q8IW50-5"/>
    <property type="nucleotide sequence ID" value="NM_001184943.2"/>
</dbReference>
<dbReference type="RefSeq" id="NP_001171874.1">
    <molecule id="Q8IW50-3"/>
    <property type="nucleotide sequence ID" value="NM_001184945.2"/>
</dbReference>
<dbReference type="RefSeq" id="NP_671735.1">
    <molecule id="Q8IW50-6"/>
    <property type="nucleotide sequence ID" value="NM_147202.2"/>
</dbReference>
<dbReference type="RefSeq" id="XP_011516100.1">
    <property type="nucleotide sequence ID" value="XM_011517798.2"/>
</dbReference>
<dbReference type="BioGRID" id="128461">
    <property type="interactions" value="53"/>
</dbReference>
<dbReference type="CORUM" id="Q8IW50"/>
<dbReference type="FunCoup" id="Q8IW50">
    <property type="interactions" value="502"/>
</dbReference>
<dbReference type="IntAct" id="Q8IW50">
    <property type="interactions" value="35"/>
</dbReference>
<dbReference type="MINT" id="Q8IW50"/>
<dbReference type="STRING" id="9606.ENSP00000499069"/>
<dbReference type="iPTMnet" id="Q8IW50"/>
<dbReference type="PhosphoSitePlus" id="Q8IW50"/>
<dbReference type="SwissPalm" id="Q8IW50"/>
<dbReference type="BioMuta" id="FAM219A"/>
<dbReference type="DMDM" id="209572756"/>
<dbReference type="jPOST" id="Q8IW50"/>
<dbReference type="MassIVE" id="Q8IW50"/>
<dbReference type="PaxDb" id="9606-ENSP00000392452"/>
<dbReference type="PeptideAtlas" id="Q8IW50"/>
<dbReference type="ProteomicsDB" id="70811">
    <molecule id="Q8IW50-1"/>
</dbReference>
<dbReference type="ProteomicsDB" id="70812">
    <molecule id="Q8IW50-2"/>
</dbReference>
<dbReference type="ProteomicsDB" id="70813">
    <molecule id="Q8IW50-3"/>
</dbReference>
<dbReference type="ProteomicsDB" id="70814">
    <molecule id="Q8IW50-4"/>
</dbReference>
<dbReference type="ProteomicsDB" id="70815">
    <molecule id="Q8IW50-5"/>
</dbReference>
<dbReference type="ProteomicsDB" id="70816">
    <molecule id="Q8IW50-6"/>
</dbReference>
<dbReference type="ProteomicsDB" id="70817">
    <molecule id="Q8IW50-7"/>
</dbReference>
<dbReference type="Pumba" id="Q8IW50"/>
<dbReference type="Antibodypedia" id="11236">
    <property type="antibodies" value="79 antibodies from 16 providers"/>
</dbReference>
<dbReference type="DNASU" id="203259"/>
<dbReference type="Ensembl" id="ENST00000297620.8">
    <molecule id="Q8IW50-6"/>
    <property type="protein sequence ID" value="ENSP00000297620.4"/>
    <property type="gene ID" value="ENSG00000164970.15"/>
</dbReference>
<dbReference type="Ensembl" id="ENST00000445726.5">
    <molecule id="Q8IW50-1"/>
    <property type="protein sequence ID" value="ENSP00000392452.1"/>
    <property type="gene ID" value="ENSG00000164970.15"/>
</dbReference>
<dbReference type="Ensembl" id="ENST00000651358.1">
    <molecule id="Q8IW50-1"/>
    <property type="protein sequence ID" value="ENSP00000499069.1"/>
    <property type="gene ID" value="ENSG00000164970.15"/>
</dbReference>
<dbReference type="GeneID" id="203259"/>
<dbReference type="KEGG" id="hsa:203259"/>
<dbReference type="MANE-Select" id="ENST00000651358.1">
    <property type="protein sequence ID" value="ENSP00000499069.1"/>
    <property type="RefSeq nucleotide sequence ID" value="NM_001184940.2"/>
    <property type="RefSeq protein sequence ID" value="NP_001171869.1"/>
</dbReference>
<dbReference type="UCSC" id="uc003zuj.4">
    <molecule id="Q8IW50-1"/>
    <property type="organism name" value="human"/>
</dbReference>
<dbReference type="AGR" id="HGNC:19920"/>
<dbReference type="CTD" id="203259"/>
<dbReference type="GeneCards" id="FAM219A"/>
<dbReference type="HGNC" id="HGNC:19920">
    <property type="gene designation" value="FAM219A"/>
</dbReference>
<dbReference type="HPA" id="ENSG00000164970">
    <property type="expression patterns" value="Tissue enhanced (brain)"/>
</dbReference>
<dbReference type="MalaCards" id="FAM219A"/>
<dbReference type="neXtProt" id="NX_Q8IW50"/>
<dbReference type="OpenTargets" id="ENSG00000164970"/>
<dbReference type="PharmGKB" id="PA134916501"/>
<dbReference type="VEuPathDB" id="HostDB:ENSG00000164970"/>
<dbReference type="eggNOG" id="ENOG502QS86">
    <property type="taxonomic scope" value="Eukaryota"/>
</dbReference>
<dbReference type="GeneTree" id="ENSGT00390000000860"/>
<dbReference type="InParanoid" id="Q8IW50"/>
<dbReference type="OMA" id="SCCNPSQ"/>
<dbReference type="OrthoDB" id="6119141at2759"/>
<dbReference type="PAN-GO" id="Q8IW50">
    <property type="GO annotations" value="0 GO annotations based on evolutionary models"/>
</dbReference>
<dbReference type="PhylomeDB" id="Q8IW50"/>
<dbReference type="TreeFam" id="TF331928"/>
<dbReference type="PathwayCommons" id="Q8IW50"/>
<dbReference type="SignaLink" id="Q8IW50"/>
<dbReference type="BioGRID-ORCS" id="203259">
    <property type="hits" value="37 hits in 1156 CRISPR screens"/>
</dbReference>
<dbReference type="ChiTaRS" id="FAM219A">
    <property type="organism name" value="human"/>
</dbReference>
<dbReference type="GenomeRNAi" id="203259"/>
<dbReference type="Pharos" id="Q8IW50">
    <property type="development level" value="Tdark"/>
</dbReference>
<dbReference type="PRO" id="PR:Q8IW50"/>
<dbReference type="Proteomes" id="UP000005640">
    <property type="component" value="Chromosome 9"/>
</dbReference>
<dbReference type="RNAct" id="Q8IW50">
    <property type="molecule type" value="protein"/>
</dbReference>
<dbReference type="Bgee" id="ENSG00000164970">
    <property type="expression patterns" value="Expressed in ventricular zone and 173 other cell types or tissues"/>
</dbReference>
<dbReference type="ExpressionAtlas" id="Q8IW50">
    <property type="expression patterns" value="baseline and differential"/>
</dbReference>
<dbReference type="InterPro" id="IPR029339">
    <property type="entry name" value="FAM219"/>
</dbReference>
<dbReference type="PANTHER" id="PTHR31281">
    <property type="entry name" value="PROTEIN FAM219A"/>
    <property type="match status" value="1"/>
</dbReference>
<dbReference type="PANTHER" id="PTHR31281:SF0">
    <property type="entry name" value="PROTEIN FAM219A"/>
    <property type="match status" value="1"/>
</dbReference>
<dbReference type="Pfam" id="PF15260">
    <property type="entry name" value="FAM219A"/>
    <property type="match status" value="1"/>
</dbReference>
<name>F219A_HUMAN</name>
<feature type="chain" id="PRO_0000089676" description="Protein FAM219A">
    <location>
        <begin position="1"/>
        <end position="185"/>
    </location>
</feature>
<feature type="region of interest" description="Disordered" evidence="2">
    <location>
        <begin position="1"/>
        <end position="131"/>
    </location>
</feature>
<feature type="compositionally biased region" description="Basic and acidic residues" evidence="2">
    <location>
        <begin position="52"/>
        <end position="61"/>
    </location>
</feature>
<feature type="compositionally biased region" description="Polar residues" evidence="2">
    <location>
        <begin position="66"/>
        <end position="80"/>
    </location>
</feature>
<feature type="compositionally biased region" description="Low complexity" evidence="2">
    <location>
        <begin position="122"/>
        <end position="131"/>
    </location>
</feature>
<feature type="modified residue" description="N-acetylmethionine" evidence="10">
    <location>
        <position position="1"/>
    </location>
</feature>
<feature type="modified residue" description="Phosphoserine" evidence="7">
    <location>
        <position position="47"/>
    </location>
</feature>
<feature type="modified residue" description="Phosphoserine" evidence="1">
    <location>
        <position position="72"/>
    </location>
</feature>
<feature type="modified residue" description="Phosphoserine" evidence="7">
    <location>
        <position position="102"/>
    </location>
</feature>
<feature type="modified residue" description="Phosphothreonine" evidence="7 8 9">
    <location>
        <position position="113"/>
    </location>
</feature>
<feature type="modified residue" description="Phosphoserine" evidence="7 8 9">
    <location>
        <position position="115"/>
    </location>
</feature>
<feature type="modified residue" description="Phosphoserine" evidence="7">
    <location>
        <position position="122"/>
    </location>
</feature>
<feature type="splice variant" id="VSP_035492" description="In isoform 2, isoform 3 and isoform 4." evidence="3 4">
    <location>
        <begin position="10"/>
        <end position="20"/>
    </location>
</feature>
<feature type="splice variant" id="VSP_035493" description="In isoform 2, isoform 3, isoform 5 and isoform 6." evidence="3 4">
    <location>
        <begin position="37"/>
        <end position="53"/>
    </location>
</feature>
<feature type="splice variant" id="VSP_035494" description="In isoform 7." evidence="5">
    <original>SDDDFDMSRYSSSGYSSAEQINQDLNIQLLKDGYRLDEIPDDEDLDLIPPKSVNP</original>
    <variation>RCVWGLGGSWAAQRNLYSTSGLYRPHLLYCQNWDILQPESLQG</variation>
    <location>
        <begin position="115"/>
        <end position="169"/>
    </location>
</feature>
<feature type="splice variant" id="VSP_035496" description="In isoform 3, isoform 4 and isoform 5." evidence="3 4">
    <location>
        <position position="134"/>
    </location>
</feature>
<feature type="splice variant" id="VSP_035495" description="In isoform 7." evidence="5">
    <location>
        <begin position="170"/>
        <end position="185"/>
    </location>
</feature>
<feature type="sequence conflict" description="In Ref. 2; AK123887." evidence="6" ref="2">
    <original>R</original>
    <variation>G</variation>
    <location>
        <position position="123"/>
    </location>
</feature>
<comment type="interaction">
    <interactant intactId="EBI-13358054">
        <id>Q8IW50-3</id>
    </interactant>
    <interactant intactId="EBI-10196832">
        <id>P0CW20</id>
        <label>LIMS4</label>
    </interactant>
    <organismsDiffer>false</organismsDiffer>
    <experiments>3</experiments>
</comment>
<comment type="alternative products">
    <event type="alternative splicing"/>
    <isoform>
        <id>Q8IW50-1</id>
        <name>1</name>
        <sequence type="displayed"/>
    </isoform>
    <isoform>
        <id>Q8IW50-2</id>
        <name>2</name>
        <sequence type="described" ref="VSP_035492 VSP_035493"/>
    </isoform>
    <isoform>
        <id>Q8IW50-3</id>
        <name>3</name>
        <sequence type="described" ref="VSP_035492 VSP_035493 VSP_035496"/>
    </isoform>
    <isoform>
        <id>Q8IW50-4</id>
        <name>4</name>
        <sequence type="described" ref="VSP_035492 VSP_035496"/>
    </isoform>
    <isoform>
        <id>Q8IW50-5</id>
        <name>5</name>
        <sequence type="described" ref="VSP_035493 VSP_035496"/>
    </isoform>
    <isoform>
        <id>Q8IW50-6</id>
        <name>6</name>
        <sequence type="described" ref="VSP_035493"/>
    </isoform>
    <isoform>
        <id>Q8IW50-7</id>
        <name>7</name>
        <sequence type="described" ref="VSP_035494 VSP_035495"/>
    </isoform>
</comment>
<comment type="similarity">
    <text evidence="6">Belongs to the FAM219 family.</text>
</comment>